<comment type="function">
    <text evidence="5 6 7 8 9">Calcium- and integrin-binding protein that plays a role in intracellular calcium homeostasis (PubMed:23023331, PubMed:28663585, PubMed:29084757, PubMed:29255404, PubMed:34089643). Acts as an auxiliary subunit of the sensory mechanoelectrical transduction (MET) channel in hair cells (PubMed:34089643). Essential for mechanoelectrical transduction (MET) currents in auditory hair cells and thereby required for hearing (PubMed:28663585, PubMed:29084757, PubMed:29255404). Regulates the function of hair cell mechanotransduction by controlling the distribution of transmembrane channel-like proteins TMC1 and TMC2, and by regulating the function of the MET channels in hair cells (PubMed:34089643). Required for the maintenance of auditory hair cell stereocilia bundle morphology and function and for hair-cell survival in the cochlea (PubMed:28663585, PubMed:29084757, PubMed:29255404). Critical for proper photoreceptor cell maintenance and function (PubMed:23023331). Plays a role in intracellular calcium homeostasis by decreasing ATP-induced calcium release (PubMed:23023331). Seems to be dispensable for vestibular functions (PubMed:29084757).</text>
</comment>
<comment type="subunit">
    <text evidence="1 3 4 6 9 10">Monomer (By similarity). Homodimer (By similarity). Interacts with WHRN and MYO7A (By similarity). Interacts with ITGA2B (via C-terminus cytoplasmic tail region); this interaction is stabilized/increased in a calcium and magnesium-dependent manner (PubMed:18611855). Interacts with ITGA7 (via C-terminus cytoplasmic tail region); this interaction is stabilized/increased in a calcium and magnesium-dependent manner (PubMed:18989529). Interacts with TMC1 (PubMed:28663585, PubMed:34089643). Interacts with TMC2 (PubMed:28663585). Interacts with PIEZO1 (PubMed:38228630).</text>
</comment>
<comment type="subcellular location">
    <subcellularLocation>
        <location evidence="5">Cytoplasm</location>
    </subcellularLocation>
    <subcellularLocation>
        <location evidence="5 7">Cell projection</location>
        <location evidence="5 7">Stereocilium</location>
    </subcellularLocation>
    <subcellularLocation>
        <location evidence="5">Photoreceptor inner segment</location>
    </subcellularLocation>
    <subcellularLocation>
        <location evidence="5">Cell projection</location>
        <location evidence="5">Cilium</location>
        <location evidence="5">Photoreceptor outer segment</location>
    </subcellularLocation>
    <subcellularLocation>
        <location evidence="3">Cell membrane</location>
        <location evidence="3">Sarcolemma</location>
    </subcellularLocation>
    <text evidence="1 3 5 7">Colocalizes with ITGA7 at the myotendinous junctions (MTJ) and at the neuromuscular junctions (NMJ) (PubMed:18611855). Located mainly in stereocilia and at the apical surface of hair cells of the cochlea (PubMed:29084757). Localizes in the cuticular plate along and at the tip of the stereocilia of vestibular sensory hair cells (By similarity).</text>
</comment>
<comment type="tissue specificity">
    <text evidence="3 4 5 7 8">Expressed in inner and outer segments of photoreceptor cells, as well as in the pigmented epithelium. Also observed in the inner and outer plexiform layers and in the ganglion cell layer (at protein level) (PubMed:23023331). Expressed in sensory hair cell stereocilia, with expression mainly at the basal body of the kinocilium and in the hair bundle stereocilia; and the apical surface of hair cells (at protein level) (PubMed:29084757). Located in the tip region of the stereocilia and at the apical surface of hair cells around the cuticular plate (at protein level) (PubMed:29084757). Not expressed in the hair bundles of the vestibular hair cells (PubMed:29084757). Strongly expressed in skeletal muscles, brain, kidney and liver (PubMed:23023331, PubMed:29255404). Expressed in the skeletal muscle, retina and cochlea (PubMed:18611855, PubMed:23023331). Expressed in megakaryocytes and endothelial cells (PubMed:18989529). Expressed in heart, spleen, lung, and inner ear (PubMed:29255404). In the inner ear, expressed in the vestibule, basilar membrane and spiral ganglion cells (PubMed:29255404). Expressed in the supporting cells in both the organ of Corti and the vestibular sensory epithelia (PubMed:23023331).</text>
</comment>
<comment type="developmental stage">
    <text evidence="3 5 6">Expressed in the central nervous system and in muscle at 16 dpc and onward (PubMed:18611855). Expressed in the inner ear and retina at 15.5 and 17.5 dpc (PubMed:23023331). Detected in stereocilia of cochlear hair cells at P12 and as early as P5 (at protein level) (PubMed:28663585). At P12, expressed in stereocilia and at the tips of surrounding microvilli of the auditory hair cells (at protein level) (PubMed:28663585). At P12 in the inner hair cells, distributed along the length of stereocilia and accumulated at the tips of the shortest, but still mechanotransducing, stereocili (at protein level) (PubMed:28663585). At P12 in the outer hair cells (OHCs), punctate labeling along the length of stereocilia, including labeling at the very tips of OHC stereocilia (at protein level) (PubMed:28663585).</text>
</comment>
<comment type="disruption phenotype">
    <text evidence="7 8">Causes profound hearing loss, whereas balance and retinal functions appear normal (PubMed:29084757, PubMed:29255404). Impaired stereocilia development in hair cells (PubMed:29255404). Abolished mechanoelectrical transduction (MET) currents in auditory hair cells; while unchanged in vestibular hair cells (PubMed:29255404). Hair bundle morphological abnormalities begin after birth, with regression of the stereocilia and rapid hair-cell death (PubMed:29084757). At P6-P7, the rounded horseshoe-shape bundles at the base of the cochlea lack their typical V-shape (PubMed:29084757). At P7, disorganization of stereocilia in outer hair cells (OHC), with fragmentation in some stereocilia bundles and stereocilia in the shortest row are heterogeneous in length (PubMed:29084757, PubMed:29255404). The inner hair cell (IHC) hair bundles at the cochlear base exhibit an abnormal wavy shape, but, unlike OHCs, all the stereocilia within the same row are of the same length (PubMed:29084757). At P8, the second row of OHC stereocilia are over-grown to the height close to the first row, whereas the third row are largely retracted, resulting in the loss of their staircase architecture (PubMed:29255404). In IHC, the kinocilium is not retracted properly at P8 (PubMed:29255404). On P9, most OHCs have discontinuous horseshoe-like shaped hair bundles, due to the loss of the centrally located stereocilia at the vertex of the bundle (PubMed:29084757). Many IHC bundles at this terminal mature stage still retain their kinocilia, whereas the wild-type IHCs loose this structure at post-hearing onset (beyond P14) stages (PubMed:29084757). On P18, the short row stereocilia have almost entirely disappeared in both IHC and OHC hair bundles, whereas those in the middle row are much shorter than usual, with some missing entirely (PubMed:29084757). At P20, apoptotic hair cells in the cochlea are detected (PubMed:29084757). At P30, disorganization of stereocilia is increased, with complete loss of stereocilia in some animals and other morphological abnormalities, such as stereocilia fusion (PubMed:29255404). On P90 and P120, only sporadic fused stereocilia or residual knoblike protrusions are observed on some of the remaining IHC stereociliary bundles of the mid-basal cochlea (PubMed:29084757). Near-complete loss of IHC and OHC bundles on P120 (PubMed:29084757).</text>
</comment>
<comment type="miscellaneous">
    <text evidence="1">The binding of either calcium or magnesium significantly increases the structural stability of the protein in comparison to apo-CIB (calcium- and magnesium-free form).</text>
</comment>
<sequence length="187" mass="21704">MGNKQTIFTEEQLDNYQDCTFFNKKDILKLHARFYELAPNLVPMDYRKSPIVHVPMSLIIQMPELRENPFKERIVEAFSEDGEGNLTFNDFVDMFSVLCESAPRELKANYAFKIYDFNTDNFICKEDLEMTLARLTKSELEEDEVVLVCDKVIEEADLDGDGKLGFADFEDMIAKAPDFLSTFHIRI</sequence>
<keyword id="KW-0002">3D-structure</keyword>
<keyword id="KW-0106">Calcium</keyword>
<keyword id="KW-1003">Cell membrane</keyword>
<keyword id="KW-0966">Cell projection</keyword>
<keyword id="KW-0963">Cytoplasm</keyword>
<keyword id="KW-0460">Magnesium</keyword>
<keyword id="KW-0472">Membrane</keyword>
<keyword id="KW-0479">Metal-binding</keyword>
<keyword id="KW-1185">Reference proteome</keyword>
<keyword id="KW-0677">Repeat</keyword>
<accession>Q9Z309</accession>
<feature type="chain" id="PRO_0000073535" description="Calcium and integrin-binding family member 2">
    <location>
        <begin position="1"/>
        <end position="187"/>
    </location>
</feature>
<feature type="domain" description="EF-hand 1" evidence="2">
    <location>
        <begin position="66"/>
        <end position="101"/>
    </location>
</feature>
<feature type="domain" description="EF-hand 2" evidence="2">
    <location>
        <begin position="103"/>
        <end position="138"/>
    </location>
</feature>
<feature type="domain" description="EF-hand 3" evidence="2">
    <location>
        <begin position="144"/>
        <end position="179"/>
    </location>
</feature>
<feature type="binding site" evidence="2">
    <location>
        <position position="116"/>
    </location>
    <ligand>
        <name>Ca(2+)</name>
        <dbReference type="ChEBI" id="CHEBI:29108"/>
        <label>1</label>
    </ligand>
</feature>
<feature type="binding site" evidence="2">
    <location>
        <position position="118"/>
    </location>
    <ligand>
        <name>Ca(2+)</name>
        <dbReference type="ChEBI" id="CHEBI:29108"/>
        <label>1</label>
    </ligand>
</feature>
<feature type="binding site" evidence="2">
    <location>
        <position position="120"/>
    </location>
    <ligand>
        <name>Ca(2+)</name>
        <dbReference type="ChEBI" id="CHEBI:29108"/>
        <label>1</label>
    </ligand>
</feature>
<feature type="binding site" evidence="2">
    <location>
        <position position="127"/>
    </location>
    <ligand>
        <name>Ca(2+)</name>
        <dbReference type="ChEBI" id="CHEBI:29108"/>
        <label>1</label>
    </ligand>
</feature>
<feature type="binding site" evidence="2">
    <location>
        <position position="157"/>
    </location>
    <ligand>
        <name>Ca(2+)</name>
        <dbReference type="ChEBI" id="CHEBI:29108"/>
        <label>2</label>
    </ligand>
</feature>
<feature type="binding site" evidence="2">
    <location>
        <position position="159"/>
    </location>
    <ligand>
        <name>Ca(2+)</name>
        <dbReference type="ChEBI" id="CHEBI:29108"/>
        <label>2</label>
    </ligand>
</feature>
<feature type="binding site" evidence="2">
    <location>
        <position position="161"/>
    </location>
    <ligand>
        <name>Ca(2+)</name>
        <dbReference type="ChEBI" id="CHEBI:29108"/>
        <label>2</label>
    </ligand>
</feature>
<feature type="binding site" evidence="2">
    <location>
        <position position="163"/>
    </location>
    <ligand>
        <name>Ca(2+)</name>
        <dbReference type="ChEBI" id="CHEBI:29108"/>
        <label>2</label>
    </ligand>
</feature>
<feature type="binding site" evidence="2">
    <location>
        <position position="168"/>
    </location>
    <ligand>
        <name>Ca(2+)</name>
        <dbReference type="ChEBI" id="CHEBI:29108"/>
        <label>2</label>
    </ligand>
</feature>
<feature type="mutagenesis site" description="Causes deafness; decreases interaction with TMC1 and TMC2; reduces MET currents." evidence="9">
    <original>E</original>
    <variation>D</variation>
    <location>
        <position position="64"/>
    </location>
</feature>
<feature type="mutagenesis site" description="Disrupts interaction with TMC1. Disrupts mechanoelectrical transduction (MET) in hair cells." evidence="9">
    <original>N</original>
    <variation>Q</variation>
    <location>
        <position position="68"/>
    </location>
</feature>
<feature type="mutagenesis site" description="Causes profound deafness. Does not disrupt localization in hair cell stereocilia. No obvious indications of vestibular dysfunction." evidence="6">
    <original>F</original>
    <variation>S</variation>
    <location>
        <position position="91"/>
    </location>
</feature>
<feature type="mutagenesis site" description="Weakens interaction with TMC1." evidence="9">
    <original>I</original>
    <variation>F</variation>
    <location>
        <position position="114"/>
    </location>
</feature>
<feature type="mutagenesis site" description="Causes deafness; disrupts interaction with TMC1 and TMC2; abolishes MET currents; abolishes localization of TMC1 and TMC2 to stereocilia." evidence="9">
    <original>I</original>
    <variation>T</variation>
    <location>
        <position position="123"/>
    </location>
</feature>
<feature type="mutagenesis site" description="Disrupts interaction with TMC1." evidence="9">
    <original>L</original>
    <variation>R</variation>
    <location>
        <position position="140"/>
    </location>
</feature>
<feature type="mutagenesis site" description="Disrupts interaction with TMC1. Disrupts mechanoelectrical transduction (MET) in hair cells." evidence="9">
    <original>V</original>
    <variation>F</variation>
    <location>
        <position position="152"/>
    </location>
</feature>
<feature type="mutagenesis site" description="Causes deafness; decreases interaction with TMC1 and TMC2; abolishes localization of TMC1 to stereocilia; reduces localization of TMC2 to stereocilia; reduces calcium permeability and conductance of MET channels in hair cells." evidence="9">
    <original>R</original>
    <variation>W</variation>
    <location>
        <position position="186"/>
    </location>
</feature>
<gene>
    <name type="primary">Cib2</name>
    <name type="synonym">Kip2</name>
</gene>
<evidence type="ECO:0000250" key="1">
    <source>
        <dbReference type="UniProtKB" id="O75838"/>
    </source>
</evidence>
<evidence type="ECO:0000255" key="2">
    <source>
        <dbReference type="PROSITE-ProRule" id="PRU00448"/>
    </source>
</evidence>
<evidence type="ECO:0000269" key="3">
    <source>
    </source>
</evidence>
<evidence type="ECO:0000269" key="4">
    <source>
    </source>
</evidence>
<evidence type="ECO:0000269" key="5">
    <source>
    </source>
</evidence>
<evidence type="ECO:0000269" key="6">
    <source>
    </source>
</evidence>
<evidence type="ECO:0000269" key="7">
    <source>
    </source>
</evidence>
<evidence type="ECO:0000269" key="8">
    <source>
    </source>
</evidence>
<evidence type="ECO:0000269" key="9">
    <source>
    </source>
</evidence>
<evidence type="ECO:0000269" key="10">
    <source>
    </source>
</evidence>
<organism>
    <name type="scientific">Mus musculus</name>
    <name type="common">Mouse</name>
    <dbReference type="NCBI Taxonomy" id="10090"/>
    <lineage>
        <taxon>Eukaryota</taxon>
        <taxon>Metazoa</taxon>
        <taxon>Chordata</taxon>
        <taxon>Craniata</taxon>
        <taxon>Vertebrata</taxon>
        <taxon>Euteleostomi</taxon>
        <taxon>Mammalia</taxon>
        <taxon>Eutheria</taxon>
        <taxon>Euarchontoglires</taxon>
        <taxon>Glires</taxon>
        <taxon>Rodentia</taxon>
        <taxon>Myomorpha</taxon>
        <taxon>Muroidea</taxon>
        <taxon>Muridae</taxon>
        <taxon>Murinae</taxon>
        <taxon>Mus</taxon>
        <taxon>Mus</taxon>
    </lineage>
</organism>
<proteinExistence type="evidence at protein level"/>
<name>CIB2_MOUSE</name>
<dbReference type="EMBL" id="AB016080">
    <property type="protein sequence ID" value="BAA36545.1"/>
    <property type="molecule type" value="mRNA"/>
</dbReference>
<dbReference type="EMBL" id="BC005739">
    <property type="protein sequence ID" value="AAH05739.1"/>
    <property type="molecule type" value="mRNA"/>
</dbReference>
<dbReference type="CCDS" id="CCDS40642.1"/>
<dbReference type="RefSeq" id="NP_062660.1">
    <property type="nucleotide sequence ID" value="NM_019686.6"/>
</dbReference>
<dbReference type="PDB" id="8Z3F">
    <property type="method" value="X-ray"/>
    <property type="resolution" value="1.74 A"/>
    <property type="chains" value="A=1-187"/>
</dbReference>
<dbReference type="PDBsum" id="8Z3F"/>
<dbReference type="SMR" id="Q9Z309"/>
<dbReference type="FunCoup" id="Q9Z309">
    <property type="interactions" value="105"/>
</dbReference>
<dbReference type="STRING" id="10090.ENSMUSP00000038527"/>
<dbReference type="PhosphoSitePlus" id="Q9Z309"/>
<dbReference type="PaxDb" id="10090-ENSMUSP00000038527"/>
<dbReference type="Antibodypedia" id="14987">
    <property type="antibodies" value="192 antibodies from 28 providers"/>
</dbReference>
<dbReference type="DNASU" id="56506"/>
<dbReference type="Ensembl" id="ENSMUST00000041901.7">
    <property type="protein sequence ID" value="ENSMUSP00000038527.7"/>
    <property type="gene ID" value="ENSMUSG00000037493.7"/>
</dbReference>
<dbReference type="GeneID" id="56506"/>
<dbReference type="KEGG" id="mmu:56506"/>
<dbReference type="UCSC" id="uc009prf.1">
    <property type="organism name" value="mouse"/>
</dbReference>
<dbReference type="AGR" id="MGI:1929293"/>
<dbReference type="CTD" id="10518"/>
<dbReference type="MGI" id="MGI:1929293">
    <property type="gene designation" value="Cib2"/>
</dbReference>
<dbReference type="VEuPathDB" id="HostDB:ENSMUSG00000037493"/>
<dbReference type="eggNOG" id="KOG0038">
    <property type="taxonomic scope" value="Eukaryota"/>
</dbReference>
<dbReference type="GeneTree" id="ENSGT00940000157327"/>
<dbReference type="HOGENOM" id="CLU_061288_6_0_1"/>
<dbReference type="InParanoid" id="Q9Z309"/>
<dbReference type="OMA" id="IEFQHVI"/>
<dbReference type="OrthoDB" id="114727at2759"/>
<dbReference type="PhylomeDB" id="Q9Z309"/>
<dbReference type="TreeFam" id="TF313865"/>
<dbReference type="BioGRID-ORCS" id="56506">
    <property type="hits" value="0 hits in 78 CRISPR screens"/>
</dbReference>
<dbReference type="ChiTaRS" id="Cib2">
    <property type="organism name" value="mouse"/>
</dbReference>
<dbReference type="PRO" id="PR:Q9Z309"/>
<dbReference type="Proteomes" id="UP000000589">
    <property type="component" value="Chromosome 9"/>
</dbReference>
<dbReference type="RNAct" id="Q9Z309">
    <property type="molecule type" value="protein"/>
</dbReference>
<dbReference type="Bgee" id="ENSMUSG00000037493">
    <property type="expression patterns" value="Expressed in hindlimb stylopod muscle and 181 other cell types or tissues"/>
</dbReference>
<dbReference type="ExpressionAtlas" id="Q9Z309">
    <property type="expression patterns" value="baseline and differential"/>
</dbReference>
<dbReference type="GO" id="GO:0032437">
    <property type="term" value="C:cuticular plate"/>
    <property type="evidence" value="ECO:0000250"/>
    <property type="project" value="UniProtKB"/>
</dbReference>
<dbReference type="GO" id="GO:0005737">
    <property type="term" value="C:cytoplasm"/>
    <property type="evidence" value="ECO:0000314"/>
    <property type="project" value="UniProtKB"/>
</dbReference>
<dbReference type="GO" id="GO:0005829">
    <property type="term" value="C:cytosol"/>
    <property type="evidence" value="ECO:0000304"/>
    <property type="project" value="Reactome"/>
</dbReference>
<dbReference type="GO" id="GO:0005927">
    <property type="term" value="C:muscle tendon junction"/>
    <property type="evidence" value="ECO:0000314"/>
    <property type="project" value="MGI"/>
</dbReference>
<dbReference type="GO" id="GO:0031594">
    <property type="term" value="C:neuromuscular junction"/>
    <property type="evidence" value="ECO:0000314"/>
    <property type="project" value="MGI"/>
</dbReference>
<dbReference type="GO" id="GO:0001917">
    <property type="term" value="C:photoreceptor inner segment"/>
    <property type="evidence" value="ECO:0000314"/>
    <property type="project" value="UniProtKB"/>
</dbReference>
<dbReference type="GO" id="GO:0001750">
    <property type="term" value="C:photoreceptor outer segment"/>
    <property type="evidence" value="ECO:0000314"/>
    <property type="project" value="UniProtKB"/>
</dbReference>
<dbReference type="GO" id="GO:0042383">
    <property type="term" value="C:sarcolemma"/>
    <property type="evidence" value="ECO:0000314"/>
    <property type="project" value="MGI"/>
</dbReference>
<dbReference type="GO" id="GO:0032420">
    <property type="term" value="C:stereocilium"/>
    <property type="evidence" value="ECO:0000314"/>
    <property type="project" value="UniProtKB"/>
</dbReference>
<dbReference type="GO" id="GO:0005509">
    <property type="term" value="F:calcium ion binding"/>
    <property type="evidence" value="ECO:0000314"/>
    <property type="project" value="MGI"/>
</dbReference>
<dbReference type="GO" id="GO:0005178">
    <property type="term" value="F:integrin binding"/>
    <property type="evidence" value="ECO:0000353"/>
    <property type="project" value="MGI"/>
</dbReference>
<dbReference type="GO" id="GO:0000287">
    <property type="term" value="F:magnesium ion binding"/>
    <property type="evidence" value="ECO:0000250"/>
    <property type="project" value="UniProtKB"/>
</dbReference>
<dbReference type="GO" id="GO:0042803">
    <property type="term" value="F:protein homodimerization activity"/>
    <property type="evidence" value="ECO:0000250"/>
    <property type="project" value="UniProtKB"/>
</dbReference>
<dbReference type="GO" id="GO:0044877">
    <property type="term" value="F:protein-containing complex binding"/>
    <property type="evidence" value="ECO:0000314"/>
    <property type="project" value="MGI"/>
</dbReference>
<dbReference type="GO" id="GO:0055074">
    <property type="term" value="P:calcium ion homeostasis"/>
    <property type="evidence" value="ECO:0000315"/>
    <property type="project" value="UniProtKB"/>
</dbReference>
<dbReference type="GO" id="GO:0071318">
    <property type="term" value="P:cellular response to ATP"/>
    <property type="evidence" value="ECO:0000250"/>
    <property type="project" value="UniProtKB"/>
</dbReference>
<dbReference type="GO" id="GO:0045494">
    <property type="term" value="P:photoreceptor cell maintenance"/>
    <property type="evidence" value="ECO:0000314"/>
    <property type="project" value="UniProtKB"/>
</dbReference>
<dbReference type="GO" id="GO:0007204">
    <property type="term" value="P:positive regulation of cytosolic calcium ion concentration"/>
    <property type="evidence" value="ECO:0000250"/>
    <property type="project" value="UniProtKB"/>
</dbReference>
<dbReference type="CDD" id="cd00051">
    <property type="entry name" value="EFh"/>
    <property type="match status" value="1"/>
</dbReference>
<dbReference type="FunFam" id="1.10.238.10:FF:000079">
    <property type="entry name" value="Calcium and integrin-binding family member 2"/>
    <property type="match status" value="1"/>
</dbReference>
<dbReference type="Gene3D" id="1.10.238.10">
    <property type="entry name" value="EF-hand"/>
    <property type="match status" value="2"/>
</dbReference>
<dbReference type="InterPro" id="IPR051433">
    <property type="entry name" value="CIBP"/>
</dbReference>
<dbReference type="InterPro" id="IPR011992">
    <property type="entry name" value="EF-hand-dom_pair"/>
</dbReference>
<dbReference type="InterPro" id="IPR018247">
    <property type="entry name" value="EF_Hand_1_Ca_BS"/>
</dbReference>
<dbReference type="InterPro" id="IPR002048">
    <property type="entry name" value="EF_hand_dom"/>
</dbReference>
<dbReference type="PANTHER" id="PTHR45791">
    <property type="entry name" value="CALCIUM AND INTEGRIN BINDING FAMILY MEMBER 2"/>
    <property type="match status" value="1"/>
</dbReference>
<dbReference type="PANTHER" id="PTHR45791:SF5">
    <property type="entry name" value="CALCIUM AND INTEGRIN-BINDING FAMILY MEMBER 2"/>
    <property type="match status" value="1"/>
</dbReference>
<dbReference type="Pfam" id="PF13499">
    <property type="entry name" value="EF-hand_7"/>
    <property type="match status" value="1"/>
</dbReference>
<dbReference type="SMART" id="SM00054">
    <property type="entry name" value="EFh"/>
    <property type="match status" value="3"/>
</dbReference>
<dbReference type="SUPFAM" id="SSF47473">
    <property type="entry name" value="EF-hand"/>
    <property type="match status" value="1"/>
</dbReference>
<dbReference type="PROSITE" id="PS00018">
    <property type="entry name" value="EF_HAND_1"/>
    <property type="match status" value="2"/>
</dbReference>
<dbReference type="PROSITE" id="PS50222">
    <property type="entry name" value="EF_HAND_2"/>
    <property type="match status" value="3"/>
</dbReference>
<reference key="1">
    <citation type="journal article" date="1999" name="Biochim. Biophys. Acta">
        <title>Structure, expression profile and chromosomal location of an isolog of DNA-PKcs interacting protein (KIP) gene.</title>
        <authorList>
            <person name="Seki N."/>
            <person name="Hattori A."/>
            <person name="Hayashi A."/>
            <person name="Kozuma S."/>
            <person name="Ohira M."/>
            <person name="Hori T."/>
            <person name="Saito T."/>
        </authorList>
    </citation>
    <scope>NUCLEOTIDE SEQUENCE [MRNA]</scope>
    <source>
        <tissue>Brain</tissue>
        <tissue>Testis</tissue>
    </source>
</reference>
<reference key="2">
    <citation type="journal article" date="2004" name="Genome Res.">
        <title>The status, quality, and expansion of the NIH full-length cDNA project: the Mammalian Gene Collection (MGC).</title>
        <authorList>
            <consortium name="The MGC Project Team"/>
        </authorList>
    </citation>
    <scope>NUCLEOTIDE SEQUENCE [LARGE SCALE MRNA]</scope>
    <source>
        <strain>FVB/N</strain>
        <tissue>Mammary gland</tissue>
    </source>
</reference>
<reference key="3">
    <citation type="journal article" date="2008" name="J. Biol. Chem.">
        <title>Cib2 binds integrin alpha7Bbeta1D and is reduced in laminin alpha2 chain-deficient muscular dystrophy.</title>
        <authorList>
            <person name="Hager M."/>
            <person name="Bigotti M.G."/>
            <person name="Meszaros R."/>
            <person name="Carmignac V."/>
            <person name="Holmberg J."/>
            <person name="Allamand V."/>
            <person name="Akerlund M."/>
            <person name="Kalamajski S."/>
            <person name="Brancaccio A."/>
            <person name="Mayer U."/>
            <person name="Durbeej M."/>
        </authorList>
    </citation>
    <scope>INTERACTION WITH ITGA7</scope>
    <scope>CALCIUM-BINDING</scope>
    <scope>SUBCELLULAR LOCATION</scope>
    <scope>TISSUE SPECIFICITY</scope>
    <scope>DEVELOPMENTAL STAGE</scope>
</reference>
<reference key="4">
    <citation type="journal article" date="2008" name="Thromb. Haemost.">
        <title>Characterization of calcium- and integrin-binding protein 1 (CIB1) knockout platelets: potential compensation by CIB family members.</title>
        <authorList>
            <person name="Denofrio J.C."/>
            <person name="Yuan W."/>
            <person name="Temple B.R."/>
            <person name="Gentry H.R."/>
            <person name="Parise L.V."/>
        </authorList>
    </citation>
    <scope>INTERACTION WITH ITGA2B</scope>
    <scope>TISSUE SPECIFICITY</scope>
</reference>
<reference key="5">
    <citation type="journal article" date="2012" name="Nat. Genet.">
        <title>Alterations of the CIB2 calcium- and integrin-binding protein cause Usher syndrome type 1J and nonsyndromic deafness DFNB48.</title>
        <authorList>
            <person name="Riazuddin S."/>
            <person name="Belyantseva I.A."/>
            <person name="Giese A.P."/>
            <person name="Lee K."/>
            <person name="Indzhykulian A.A."/>
            <person name="Nandamuri S.P."/>
            <person name="Yousaf R."/>
            <person name="Sinha G.P."/>
            <person name="Lee S."/>
            <person name="Terrell D."/>
            <person name="Hegde R.S."/>
            <person name="Ali R.A."/>
            <person name="Anwar S."/>
            <person name="Andrade-Elizondo P.B."/>
            <person name="Sirmaci A."/>
            <person name="Parise L.V."/>
            <person name="Basit S."/>
            <person name="Wali A."/>
            <person name="Ayub M."/>
            <person name="Ansar M."/>
            <person name="Ahmad W."/>
            <person name="Khan S.N."/>
            <person name="Akram J."/>
            <person name="Tekin M."/>
            <person name="Riazuddin S."/>
            <person name="Cook T."/>
            <person name="Buschbeck E.K."/>
            <person name="Frolenkov G.I."/>
            <person name="Leal S.M."/>
            <person name="Friedman T.B."/>
            <person name="Ahmed Z.M."/>
        </authorList>
    </citation>
    <scope>FUNCTION</scope>
    <scope>SUBCELLULAR LOCATION</scope>
    <scope>TISSUE SPECIFICITY</scope>
    <scope>DEVELOPMENTAL STAGE</scope>
</reference>
<reference key="6">
    <citation type="journal article" date="2017" name="EMBO Mol. Med.">
        <title>CIB2, defective in isolated deafness, is key for auditory hair cell mechanotransduction and survival.</title>
        <authorList>
            <person name="Michel V."/>
            <person name="Booth K.T."/>
            <person name="Patni P."/>
            <person name="Cortese M."/>
            <person name="Azaiez H."/>
            <person name="Bahloul A."/>
            <person name="Kahrizi K."/>
            <person name="Labbe M."/>
            <person name="Emptoz A."/>
            <person name="Lelli A."/>
            <person name="Degardin J."/>
            <person name="Dupont T."/>
            <person name="Aghaie A."/>
            <person name="Oficjalska-Pham D."/>
            <person name="Picaud S."/>
            <person name="Najmabadi H."/>
            <person name="Smith R.J."/>
            <person name="Bowl M.R."/>
            <person name="Brown S.D."/>
            <person name="Avan P."/>
            <person name="Petit C."/>
            <person name="El-Amraoui A."/>
        </authorList>
    </citation>
    <scope>FUNCTION</scope>
    <scope>SUBCELLULAR LOCATION</scope>
    <scope>TISSUE SPECIFICITY</scope>
    <scope>DISRUPTION PHENOTYPE</scope>
</reference>
<reference key="7">
    <citation type="journal article" date="2017" name="Front. Mol. Neurosci.">
        <title>Loss of CIB2 Causes Profound Hearing Loss and Abolishes Mechanoelectrical Transduction in Mice.</title>
        <authorList>
            <person name="Wang Y."/>
            <person name="Li J."/>
            <person name="Yao X."/>
            <person name="Li W."/>
            <person name="Du H."/>
            <person name="Tang M."/>
            <person name="Xiong W."/>
            <person name="Chai R."/>
            <person name="Xu Z."/>
        </authorList>
    </citation>
    <scope>FUNCTION</scope>
    <scope>TISSUE SPECIFICITY</scope>
    <scope>DISRUPTION PHENOTYPE</scope>
</reference>
<reference key="8">
    <citation type="journal article" date="2017" name="Nat. Commun.">
        <title>CIB2 interacts with TMC1 and TMC2 and is essential for mechanotransduction in auditory hair cells.</title>
        <authorList>
            <person name="Giese A.P.J."/>
            <person name="Tang Y.Q."/>
            <person name="Sinha G.P."/>
            <person name="Bowl M.R."/>
            <person name="Goldring A.C."/>
            <person name="Parker A."/>
            <person name="Freeman M.J."/>
            <person name="Brown S.D.M."/>
            <person name="Riazuddin S."/>
            <person name="Fettiplace R."/>
            <person name="Schafer W.R."/>
            <person name="Frolenkov G.I."/>
            <person name="Ahmed Z.M."/>
        </authorList>
    </citation>
    <scope>FUNCTION</scope>
    <scope>INTERACTION WITH TMC1 AND TMC2</scope>
    <scope>DEVELOPMENTAL STAGE</scope>
    <scope>MUTAGENESIS OF PHE-91</scope>
</reference>
<reference key="9">
    <citation type="journal article" date="2021" name="Neuron">
        <title>CIB2 and CIB3 are auxiliary subunits of the mechanotransduction channel of hair cells.</title>
        <authorList>
            <person name="Liang X."/>
            <person name="Qiu X."/>
            <person name="Dionne G."/>
            <person name="Cunningham C.L."/>
            <person name="Pucak M.L."/>
            <person name="Peng G."/>
            <person name="Kim Y.H."/>
            <person name="Lauer A."/>
            <person name="Shapiro L."/>
            <person name="Mueller U."/>
        </authorList>
    </citation>
    <scope>FUNCTION</scope>
    <scope>INTERACTION WITH TMC1</scope>
    <scope>MUTAGENESIS OF GLU-64; ASN-68; ILE-114; ILE-123; LEU-140; VAL-152 AND ARG-186</scope>
</reference>
<reference key="10">
    <citation type="journal article" date="2024" name="Nat. Commun.">
        <title>The Piezo channel is a mechano-sensitive complex component in the mammalian inner ear hair cell.</title>
        <authorList>
            <person name="Lee J.H."/>
            <person name="Perez-Flores M.C."/>
            <person name="Park S."/>
            <person name="Kim H.J."/>
            <person name="Chen Y."/>
            <person name="Kang M."/>
            <person name="Kersigo J."/>
            <person name="Choi J."/>
            <person name="Thai P.N."/>
            <person name="Woltz R.L."/>
            <person name="Perez-Flores D.C."/>
            <person name="Perkins G."/>
            <person name="Sihn C.R."/>
            <person name="Trinh P."/>
            <person name="Zhang X.D."/>
            <person name="Sirish P."/>
            <person name="Dong Y."/>
            <person name="Feng W.W."/>
            <person name="Pessah I.N."/>
            <person name="Dixon R.E."/>
            <person name="Sokolowski B."/>
            <person name="Fritzsch B."/>
            <person name="Chiamvimonvat N."/>
            <person name="Yamoah E.N."/>
        </authorList>
    </citation>
    <scope>INTERACTION WITH PIEZO1</scope>
</reference>
<protein>
    <recommendedName>
        <fullName>Calcium and integrin-binding family member 2</fullName>
    </recommendedName>
    <alternativeName>
        <fullName>Kinase-interacting protein 2</fullName>
        <shortName>KIP 2</shortName>
    </alternativeName>
</protein>